<dbReference type="EC" id="6.1.1.21" evidence="1"/>
<dbReference type="EMBL" id="CP000243">
    <property type="protein sequence ID" value="ABE08295.1"/>
    <property type="molecule type" value="Genomic_DNA"/>
</dbReference>
<dbReference type="RefSeq" id="WP_001107167.1">
    <property type="nucleotide sequence ID" value="NZ_CP064825.1"/>
</dbReference>
<dbReference type="SMR" id="Q1R8L9"/>
<dbReference type="GeneID" id="75206207"/>
<dbReference type="KEGG" id="eci:UTI89_C2835"/>
<dbReference type="HOGENOM" id="CLU_025113_1_1_6"/>
<dbReference type="Proteomes" id="UP000001952">
    <property type="component" value="Chromosome"/>
</dbReference>
<dbReference type="GO" id="GO:0005737">
    <property type="term" value="C:cytoplasm"/>
    <property type="evidence" value="ECO:0007669"/>
    <property type="project" value="UniProtKB-SubCell"/>
</dbReference>
<dbReference type="GO" id="GO:0005524">
    <property type="term" value="F:ATP binding"/>
    <property type="evidence" value="ECO:0007669"/>
    <property type="project" value="UniProtKB-UniRule"/>
</dbReference>
<dbReference type="GO" id="GO:0004821">
    <property type="term" value="F:histidine-tRNA ligase activity"/>
    <property type="evidence" value="ECO:0007669"/>
    <property type="project" value="UniProtKB-UniRule"/>
</dbReference>
<dbReference type="GO" id="GO:0006427">
    <property type="term" value="P:histidyl-tRNA aminoacylation"/>
    <property type="evidence" value="ECO:0007669"/>
    <property type="project" value="UniProtKB-UniRule"/>
</dbReference>
<dbReference type="CDD" id="cd00773">
    <property type="entry name" value="HisRS-like_core"/>
    <property type="match status" value="1"/>
</dbReference>
<dbReference type="CDD" id="cd00859">
    <property type="entry name" value="HisRS_anticodon"/>
    <property type="match status" value="1"/>
</dbReference>
<dbReference type="FunFam" id="3.30.930.10:FF:000005">
    <property type="entry name" value="Histidine--tRNA ligase"/>
    <property type="match status" value="1"/>
</dbReference>
<dbReference type="FunFam" id="3.40.50.800:FF:000007">
    <property type="entry name" value="Histidine--tRNA ligase"/>
    <property type="match status" value="1"/>
</dbReference>
<dbReference type="Gene3D" id="3.40.50.800">
    <property type="entry name" value="Anticodon-binding domain"/>
    <property type="match status" value="1"/>
</dbReference>
<dbReference type="Gene3D" id="3.30.930.10">
    <property type="entry name" value="Bira Bifunctional Protein, Domain 2"/>
    <property type="match status" value="1"/>
</dbReference>
<dbReference type="HAMAP" id="MF_00127">
    <property type="entry name" value="His_tRNA_synth"/>
    <property type="match status" value="1"/>
</dbReference>
<dbReference type="InterPro" id="IPR006195">
    <property type="entry name" value="aa-tRNA-synth_II"/>
</dbReference>
<dbReference type="InterPro" id="IPR045864">
    <property type="entry name" value="aa-tRNA-synth_II/BPL/LPL"/>
</dbReference>
<dbReference type="InterPro" id="IPR004154">
    <property type="entry name" value="Anticodon-bd"/>
</dbReference>
<dbReference type="InterPro" id="IPR036621">
    <property type="entry name" value="Anticodon-bd_dom_sf"/>
</dbReference>
<dbReference type="InterPro" id="IPR015807">
    <property type="entry name" value="His-tRNA-ligase"/>
</dbReference>
<dbReference type="InterPro" id="IPR041715">
    <property type="entry name" value="HisRS-like_core"/>
</dbReference>
<dbReference type="InterPro" id="IPR004516">
    <property type="entry name" value="HisRS/HisZ"/>
</dbReference>
<dbReference type="InterPro" id="IPR033656">
    <property type="entry name" value="HisRS_anticodon"/>
</dbReference>
<dbReference type="NCBIfam" id="TIGR00442">
    <property type="entry name" value="hisS"/>
    <property type="match status" value="1"/>
</dbReference>
<dbReference type="PANTHER" id="PTHR43707:SF1">
    <property type="entry name" value="HISTIDINE--TRNA LIGASE, MITOCHONDRIAL-RELATED"/>
    <property type="match status" value="1"/>
</dbReference>
<dbReference type="PANTHER" id="PTHR43707">
    <property type="entry name" value="HISTIDYL-TRNA SYNTHETASE"/>
    <property type="match status" value="1"/>
</dbReference>
<dbReference type="Pfam" id="PF03129">
    <property type="entry name" value="HGTP_anticodon"/>
    <property type="match status" value="1"/>
</dbReference>
<dbReference type="Pfam" id="PF13393">
    <property type="entry name" value="tRNA-synt_His"/>
    <property type="match status" value="1"/>
</dbReference>
<dbReference type="PIRSF" id="PIRSF001549">
    <property type="entry name" value="His-tRNA_synth"/>
    <property type="match status" value="1"/>
</dbReference>
<dbReference type="SUPFAM" id="SSF52954">
    <property type="entry name" value="Class II aaRS ABD-related"/>
    <property type="match status" value="1"/>
</dbReference>
<dbReference type="SUPFAM" id="SSF55681">
    <property type="entry name" value="Class II aaRS and biotin synthetases"/>
    <property type="match status" value="1"/>
</dbReference>
<dbReference type="PROSITE" id="PS50862">
    <property type="entry name" value="AA_TRNA_LIGASE_II"/>
    <property type="match status" value="1"/>
</dbReference>
<evidence type="ECO:0000255" key="1">
    <source>
        <dbReference type="HAMAP-Rule" id="MF_00127"/>
    </source>
</evidence>
<keyword id="KW-0030">Aminoacyl-tRNA synthetase</keyword>
<keyword id="KW-0067">ATP-binding</keyword>
<keyword id="KW-0963">Cytoplasm</keyword>
<keyword id="KW-0436">Ligase</keyword>
<keyword id="KW-0547">Nucleotide-binding</keyword>
<keyword id="KW-0648">Protein biosynthesis</keyword>
<accession>Q1R8L9</accession>
<proteinExistence type="inferred from homology"/>
<gene>
    <name evidence="1" type="primary">hisS</name>
    <name type="ordered locus">UTI89_C2835</name>
</gene>
<protein>
    <recommendedName>
        <fullName evidence="1">Histidine--tRNA ligase</fullName>
        <ecNumber evidence="1">6.1.1.21</ecNumber>
    </recommendedName>
    <alternativeName>
        <fullName evidence="1">Histidyl-tRNA synthetase</fullName>
        <shortName evidence="1">HisRS</shortName>
    </alternativeName>
</protein>
<reference key="1">
    <citation type="journal article" date="2006" name="Proc. Natl. Acad. Sci. U.S.A.">
        <title>Identification of genes subject to positive selection in uropathogenic strains of Escherichia coli: a comparative genomics approach.</title>
        <authorList>
            <person name="Chen S.L."/>
            <person name="Hung C.-S."/>
            <person name="Xu J."/>
            <person name="Reigstad C.S."/>
            <person name="Magrini V."/>
            <person name="Sabo A."/>
            <person name="Blasiar D."/>
            <person name="Bieri T."/>
            <person name="Meyer R.R."/>
            <person name="Ozersky P."/>
            <person name="Armstrong J.R."/>
            <person name="Fulton R.S."/>
            <person name="Latreille J.P."/>
            <person name="Spieth J."/>
            <person name="Hooton T.M."/>
            <person name="Mardis E.R."/>
            <person name="Hultgren S.J."/>
            <person name="Gordon J.I."/>
        </authorList>
    </citation>
    <scope>NUCLEOTIDE SEQUENCE [LARGE SCALE GENOMIC DNA]</scope>
    <source>
        <strain>UTI89 / UPEC</strain>
    </source>
</reference>
<comment type="catalytic activity">
    <reaction evidence="1">
        <text>tRNA(His) + L-histidine + ATP = L-histidyl-tRNA(His) + AMP + diphosphate + H(+)</text>
        <dbReference type="Rhea" id="RHEA:17313"/>
        <dbReference type="Rhea" id="RHEA-COMP:9665"/>
        <dbReference type="Rhea" id="RHEA-COMP:9689"/>
        <dbReference type="ChEBI" id="CHEBI:15378"/>
        <dbReference type="ChEBI" id="CHEBI:30616"/>
        <dbReference type="ChEBI" id="CHEBI:33019"/>
        <dbReference type="ChEBI" id="CHEBI:57595"/>
        <dbReference type="ChEBI" id="CHEBI:78442"/>
        <dbReference type="ChEBI" id="CHEBI:78527"/>
        <dbReference type="ChEBI" id="CHEBI:456215"/>
        <dbReference type="EC" id="6.1.1.21"/>
    </reaction>
</comment>
<comment type="subunit">
    <text evidence="1">Homodimer.</text>
</comment>
<comment type="subcellular location">
    <subcellularLocation>
        <location evidence="1">Cytoplasm</location>
    </subcellularLocation>
</comment>
<comment type="similarity">
    <text evidence="1">Belongs to the class-II aminoacyl-tRNA synthetase family.</text>
</comment>
<organism>
    <name type="scientific">Escherichia coli (strain UTI89 / UPEC)</name>
    <dbReference type="NCBI Taxonomy" id="364106"/>
    <lineage>
        <taxon>Bacteria</taxon>
        <taxon>Pseudomonadati</taxon>
        <taxon>Pseudomonadota</taxon>
        <taxon>Gammaproteobacteria</taxon>
        <taxon>Enterobacterales</taxon>
        <taxon>Enterobacteriaceae</taxon>
        <taxon>Escherichia</taxon>
    </lineage>
</organism>
<feature type="chain" id="PRO_1000016357" description="Histidine--tRNA ligase">
    <location>
        <begin position="1"/>
        <end position="424"/>
    </location>
</feature>
<sequence>MAKNIQAIRGMNDYLPGETAIWQRIEGTLKNVLGSYGYSEIRLPIVEQTPLFKRAIGEVTDVVEKEMYTFEDRNGDSLTLRPEGTAGCVRAGIEHGLLYNQEQRLWYIGPMFRHERPQKGRYRQFHQLGCEVFGLQGPDIDAELIMLTARWWRALGISEHVTLELNSIGSLEARANYRDALVAFLEQHKEKLDEDCKRRMYTNPLRVLDSKNPEVQALLNDAPALGDYLDEESREHFAGLCKLLESAGIAYTVNQRLVRGLDYYNRTVFEWVTNSLGSQGTVCAGGRYDGLVEQLGGRATPAVGFAMGLERLVLLVQAVNPEFKADPVVDIYLVASGADTQSAAMALAERLRDELPGVKLMTNHGGGNFKKQFARADKWGARVAVVLGESEVANGTAVVKDLRSGEQTAVAQDSVAAHLRTLLG</sequence>
<name>SYH_ECOUT</name>